<protein>
    <recommendedName>
        <fullName>Probable small nuclear ribonucleoprotein G</fullName>
        <shortName>snRNP-G</shortName>
    </recommendedName>
    <alternativeName>
        <fullName>Sm protein G</fullName>
        <shortName>Sm-G</shortName>
        <shortName>SmG</shortName>
    </alternativeName>
</protein>
<reference key="1">
    <citation type="journal article" date="1999" name="Nature">
        <title>Sequence and analysis of chromosome 2 of the plant Arabidopsis thaliana.</title>
        <authorList>
            <person name="Lin X."/>
            <person name="Kaul S."/>
            <person name="Rounsley S.D."/>
            <person name="Shea T.P."/>
            <person name="Benito M.-I."/>
            <person name="Town C.D."/>
            <person name="Fujii C.Y."/>
            <person name="Mason T.M."/>
            <person name="Bowman C.L."/>
            <person name="Barnstead M.E."/>
            <person name="Feldblyum T.V."/>
            <person name="Buell C.R."/>
            <person name="Ketchum K.A."/>
            <person name="Lee J.J."/>
            <person name="Ronning C.M."/>
            <person name="Koo H.L."/>
            <person name="Moffat K.S."/>
            <person name="Cronin L.A."/>
            <person name="Shen M."/>
            <person name="Pai G."/>
            <person name="Van Aken S."/>
            <person name="Umayam L."/>
            <person name="Tallon L.J."/>
            <person name="Gill J.E."/>
            <person name="Adams M.D."/>
            <person name="Carrera A.J."/>
            <person name="Creasy T.H."/>
            <person name="Goodman H.M."/>
            <person name="Somerville C.R."/>
            <person name="Copenhaver G.P."/>
            <person name="Preuss D."/>
            <person name="Nierman W.C."/>
            <person name="White O."/>
            <person name="Eisen J.A."/>
            <person name="Salzberg S.L."/>
            <person name="Fraser C.M."/>
            <person name="Venter J.C."/>
        </authorList>
    </citation>
    <scope>NUCLEOTIDE SEQUENCE [LARGE SCALE GENOMIC DNA]</scope>
    <source>
        <strain>cv. Columbia</strain>
    </source>
</reference>
<reference key="2">
    <citation type="journal article" date="2017" name="Plant J.">
        <title>Araport11: a complete reannotation of the Arabidopsis thaliana reference genome.</title>
        <authorList>
            <person name="Cheng C.Y."/>
            <person name="Krishnakumar V."/>
            <person name="Chan A.P."/>
            <person name="Thibaud-Nissen F."/>
            <person name="Schobel S."/>
            <person name="Town C.D."/>
        </authorList>
    </citation>
    <scope>GENOME REANNOTATION</scope>
    <source>
        <strain>cv. Columbia</strain>
    </source>
</reference>
<reference key="3">
    <citation type="journal article" date="2003" name="Science">
        <title>Empirical analysis of transcriptional activity in the Arabidopsis genome.</title>
        <authorList>
            <person name="Yamada K."/>
            <person name="Lim J."/>
            <person name="Dale J.M."/>
            <person name="Chen H."/>
            <person name="Shinn P."/>
            <person name="Palm C.J."/>
            <person name="Southwick A.M."/>
            <person name="Wu H.C."/>
            <person name="Kim C.J."/>
            <person name="Nguyen M."/>
            <person name="Pham P.K."/>
            <person name="Cheuk R.F."/>
            <person name="Karlin-Newmann G."/>
            <person name="Liu S.X."/>
            <person name="Lam B."/>
            <person name="Sakano H."/>
            <person name="Wu T."/>
            <person name="Yu G."/>
            <person name="Miranda M."/>
            <person name="Quach H.L."/>
            <person name="Tripp M."/>
            <person name="Chang C.H."/>
            <person name="Lee J.M."/>
            <person name="Toriumi M.J."/>
            <person name="Chan M.M."/>
            <person name="Tang C.C."/>
            <person name="Onodera C.S."/>
            <person name="Deng J.M."/>
            <person name="Akiyama K."/>
            <person name="Ansari Y."/>
            <person name="Arakawa T."/>
            <person name="Banh J."/>
            <person name="Banno F."/>
            <person name="Bowser L."/>
            <person name="Brooks S.Y."/>
            <person name="Carninci P."/>
            <person name="Chao Q."/>
            <person name="Choy N."/>
            <person name="Enju A."/>
            <person name="Goldsmith A.D."/>
            <person name="Gurjal M."/>
            <person name="Hansen N.F."/>
            <person name="Hayashizaki Y."/>
            <person name="Johnson-Hopson C."/>
            <person name="Hsuan V.W."/>
            <person name="Iida K."/>
            <person name="Karnes M."/>
            <person name="Khan S."/>
            <person name="Koesema E."/>
            <person name="Ishida J."/>
            <person name="Jiang P.X."/>
            <person name="Jones T."/>
            <person name="Kawai J."/>
            <person name="Kamiya A."/>
            <person name="Meyers C."/>
            <person name="Nakajima M."/>
            <person name="Narusaka M."/>
            <person name="Seki M."/>
            <person name="Sakurai T."/>
            <person name="Satou M."/>
            <person name="Tamse R."/>
            <person name="Vaysberg M."/>
            <person name="Wallender E.K."/>
            <person name="Wong C."/>
            <person name="Yamamura Y."/>
            <person name="Yuan S."/>
            <person name="Shinozaki K."/>
            <person name="Davis R.W."/>
            <person name="Theologis A."/>
            <person name="Ecker J.R."/>
        </authorList>
    </citation>
    <scope>NUCLEOTIDE SEQUENCE [LARGE SCALE MRNA]</scope>
    <source>
        <strain>cv. Columbia</strain>
    </source>
</reference>
<reference key="4">
    <citation type="submission" date="2002-03" db="EMBL/GenBank/DDBJ databases">
        <title>Full-length cDNA from Arabidopsis thaliana.</title>
        <authorList>
            <person name="Brover V.V."/>
            <person name="Troukhan M.E."/>
            <person name="Alexandrov N.A."/>
            <person name="Lu Y.-P."/>
            <person name="Flavell R.B."/>
            <person name="Feldmann K.A."/>
        </authorList>
    </citation>
    <scope>NUCLEOTIDE SEQUENCE [LARGE SCALE MRNA]</scope>
</reference>
<sequence length="80" mass="8839">MSRSGQPPDLKKYMDKKLQIKLNANRMVTGTLRGFDQFMNLVVDNTVEVNGNDKTDIGMVVIRGNSIVTVEALEPVGRSS</sequence>
<evidence type="ECO:0000250" key="1"/>
<evidence type="ECO:0000255" key="2">
    <source>
        <dbReference type="PROSITE-ProRule" id="PRU01346"/>
    </source>
</evidence>
<evidence type="ECO:0000305" key="3"/>
<gene>
    <name type="ordered locus">At2g23930</name>
    <name type="ORF">T29E15.13</name>
</gene>
<feature type="chain" id="PRO_0000125549" description="Probable small nuclear ribonucleoprotein G">
    <location>
        <begin position="1"/>
        <end position="80"/>
    </location>
</feature>
<feature type="domain" description="Sm" evidence="2">
    <location>
        <begin position="5"/>
        <end position="76"/>
    </location>
</feature>
<accession>O82221</accession>
<dbReference type="EMBL" id="AC005170">
    <property type="protein sequence ID" value="AAC63663.1"/>
    <property type="molecule type" value="Genomic_DNA"/>
</dbReference>
<dbReference type="EMBL" id="CP002685">
    <property type="protein sequence ID" value="AEC07503.1"/>
    <property type="molecule type" value="Genomic_DNA"/>
</dbReference>
<dbReference type="EMBL" id="BT002035">
    <property type="protein sequence ID" value="AAN72046.1"/>
    <property type="molecule type" value="mRNA"/>
</dbReference>
<dbReference type="EMBL" id="BT006498">
    <property type="protein sequence ID" value="AAP21306.1"/>
    <property type="molecule type" value="mRNA"/>
</dbReference>
<dbReference type="EMBL" id="AY088256">
    <property type="protein sequence ID" value="AAM65796.1"/>
    <property type="molecule type" value="mRNA"/>
</dbReference>
<dbReference type="PIR" id="E84630">
    <property type="entry name" value="E84630"/>
</dbReference>
<dbReference type="RefSeq" id="NP_179971.1">
    <molecule id="O82221-1"/>
    <property type="nucleotide sequence ID" value="NM_127954.3"/>
</dbReference>
<dbReference type="SMR" id="O82221"/>
<dbReference type="BioGRID" id="2277">
    <property type="interactions" value="11"/>
</dbReference>
<dbReference type="FunCoup" id="O82221">
    <property type="interactions" value="3622"/>
</dbReference>
<dbReference type="STRING" id="3702.O82221"/>
<dbReference type="iPTMnet" id="O82221"/>
<dbReference type="PaxDb" id="3702-AT2G23930.1"/>
<dbReference type="ProteomicsDB" id="226691">
    <molecule id="O82221-1"/>
</dbReference>
<dbReference type="EnsemblPlants" id="AT2G23930.1">
    <molecule id="O82221-1"/>
    <property type="protein sequence ID" value="AT2G23930.1"/>
    <property type="gene ID" value="AT2G23930"/>
</dbReference>
<dbReference type="GeneID" id="816925"/>
<dbReference type="Gramene" id="AT2G23930.1">
    <molecule id="O82221-1"/>
    <property type="protein sequence ID" value="AT2G23930.1"/>
    <property type="gene ID" value="AT2G23930"/>
</dbReference>
<dbReference type="KEGG" id="ath:AT2G23930"/>
<dbReference type="Araport" id="AT2G23930"/>
<dbReference type="TAIR" id="AT2G23930">
    <property type="gene designation" value="SNRNP-G"/>
</dbReference>
<dbReference type="eggNOG" id="KOG1780">
    <property type="taxonomic scope" value="Eukaryota"/>
</dbReference>
<dbReference type="HOGENOM" id="CLU_076902_10_1_1"/>
<dbReference type="InParanoid" id="O82221"/>
<dbReference type="OMA" id="QENDIGM"/>
<dbReference type="OrthoDB" id="1849580at2759"/>
<dbReference type="PhylomeDB" id="O82221"/>
<dbReference type="CD-CODE" id="4299E36E">
    <property type="entry name" value="Nucleolus"/>
</dbReference>
<dbReference type="PRO" id="PR:O82221"/>
<dbReference type="Proteomes" id="UP000006548">
    <property type="component" value="Chromosome 2"/>
</dbReference>
<dbReference type="ExpressionAtlas" id="O82221">
    <property type="expression patterns" value="baseline and differential"/>
</dbReference>
<dbReference type="GO" id="GO:0005681">
    <property type="term" value="C:spliceosomal complex"/>
    <property type="evidence" value="ECO:0007669"/>
    <property type="project" value="UniProtKB-KW"/>
</dbReference>
<dbReference type="GO" id="GO:0005773">
    <property type="term" value="C:vacuole"/>
    <property type="evidence" value="ECO:0007005"/>
    <property type="project" value="TAIR"/>
</dbReference>
<dbReference type="GO" id="GO:0003729">
    <property type="term" value="F:mRNA binding"/>
    <property type="evidence" value="ECO:0007005"/>
    <property type="project" value="TAIR"/>
</dbReference>
<dbReference type="GO" id="GO:0000398">
    <property type="term" value="P:mRNA splicing, via spliceosome"/>
    <property type="evidence" value="ECO:0007669"/>
    <property type="project" value="InterPro"/>
</dbReference>
<dbReference type="CDD" id="cd01719">
    <property type="entry name" value="Sm_G"/>
    <property type="match status" value="1"/>
</dbReference>
<dbReference type="FunFam" id="2.30.30.100:FF:000023">
    <property type="entry name" value="Small nuclear ribonucleoprotein G"/>
    <property type="match status" value="1"/>
</dbReference>
<dbReference type="Gene3D" id="2.30.30.100">
    <property type="match status" value="1"/>
</dbReference>
<dbReference type="InterPro" id="IPR044641">
    <property type="entry name" value="Lsm7/SmG-like"/>
</dbReference>
<dbReference type="InterPro" id="IPR010920">
    <property type="entry name" value="LSM_dom_sf"/>
</dbReference>
<dbReference type="InterPro" id="IPR047575">
    <property type="entry name" value="Sm"/>
</dbReference>
<dbReference type="InterPro" id="IPR001163">
    <property type="entry name" value="Sm_dom_euk/arc"/>
</dbReference>
<dbReference type="InterPro" id="IPR034098">
    <property type="entry name" value="Sm_G"/>
</dbReference>
<dbReference type="PANTHER" id="PTHR10553">
    <property type="entry name" value="SMALL NUCLEAR RIBONUCLEOPROTEIN"/>
    <property type="match status" value="1"/>
</dbReference>
<dbReference type="PANTHER" id="PTHR10553:SF2">
    <property type="entry name" value="SMALL NUCLEAR RIBONUCLEOPROTEIN G"/>
    <property type="match status" value="1"/>
</dbReference>
<dbReference type="Pfam" id="PF01423">
    <property type="entry name" value="LSM"/>
    <property type="match status" value="1"/>
</dbReference>
<dbReference type="PIRSF" id="PIRSF037188">
    <property type="entry name" value="U6_snRNA_Lsm7"/>
    <property type="match status" value="1"/>
</dbReference>
<dbReference type="SMART" id="SM00651">
    <property type="entry name" value="Sm"/>
    <property type="match status" value="1"/>
</dbReference>
<dbReference type="SUPFAM" id="SSF50182">
    <property type="entry name" value="Sm-like ribonucleoproteins"/>
    <property type="match status" value="1"/>
</dbReference>
<dbReference type="PROSITE" id="PS52002">
    <property type="entry name" value="SM"/>
    <property type="match status" value="1"/>
</dbReference>
<name>RUXG_ARATH</name>
<comment type="function">
    <text evidence="1">Probable common Sm protein, is found in U1 and U2 snRNPs and may be part of the spliceosome.</text>
</comment>
<comment type="subcellular location">
    <subcellularLocation>
        <location evidence="3">Nucleus</location>
    </subcellularLocation>
</comment>
<comment type="alternative products">
    <event type="alternative splicing"/>
    <isoform>
        <id>O82221-1</id>
        <name>1</name>
        <sequence type="displayed"/>
    </isoform>
    <text>A number of isoforms are produced. According to EST sequences.</text>
</comment>
<comment type="similarity">
    <text evidence="3">Belongs to the snRNP Sm proteins family.</text>
</comment>
<keyword id="KW-0025">Alternative splicing</keyword>
<keyword id="KW-0507">mRNA processing</keyword>
<keyword id="KW-0508">mRNA splicing</keyword>
<keyword id="KW-0539">Nucleus</keyword>
<keyword id="KW-1185">Reference proteome</keyword>
<keyword id="KW-0687">Ribonucleoprotein</keyword>
<keyword id="KW-0694">RNA-binding</keyword>
<keyword id="KW-0747">Spliceosome</keyword>
<proteinExistence type="inferred from homology"/>
<organism>
    <name type="scientific">Arabidopsis thaliana</name>
    <name type="common">Mouse-ear cress</name>
    <dbReference type="NCBI Taxonomy" id="3702"/>
    <lineage>
        <taxon>Eukaryota</taxon>
        <taxon>Viridiplantae</taxon>
        <taxon>Streptophyta</taxon>
        <taxon>Embryophyta</taxon>
        <taxon>Tracheophyta</taxon>
        <taxon>Spermatophyta</taxon>
        <taxon>Magnoliopsida</taxon>
        <taxon>eudicotyledons</taxon>
        <taxon>Gunneridae</taxon>
        <taxon>Pentapetalae</taxon>
        <taxon>rosids</taxon>
        <taxon>malvids</taxon>
        <taxon>Brassicales</taxon>
        <taxon>Brassicaceae</taxon>
        <taxon>Camelineae</taxon>
        <taxon>Arabidopsis</taxon>
    </lineage>
</organism>